<sequence length="354" mass="38294">MLEEKGIERRDFMKWAGAMTAMLSLPATFTPLTAKAAELADRLPVIWLHMAECTGCSESLLRTDGPGIDSLIFDYISLEYHETVMAAAGWQAEHNLEHAIEKYKGRYVLMVEGGIPAGSSEFYLTVGPHGTTGAEHARHASANAAAIFAIGSCSSFGGVQAARPNPTNAQPLSKVTNKPVINVPGCPPSEKNIVGNVLHFILFGTLPSVDAFNRPMWAYGLRIHDLCERRGRFDAGEFVQEFGDEGAKKGYCLYKVGCKGPYTFNNCSKLRFNQHTSWPVQAGHGCIGCSEPDFWDTMGPFEEPVANRLYATAFDGLGADKTADKIGITLLAATAVGVAAHAVLSMMVKDKENN</sequence>
<accession>P31884</accession>
<organism>
    <name type="scientific">Wolinella succinogenes (strain ATCC 29543 / DSM 1740 / CCUG 13145 / JCM 31913 / LMG 7466 / NCTC 11488 / FDC 602W)</name>
    <name type="common">Vibrio succinogenes</name>
    <dbReference type="NCBI Taxonomy" id="273121"/>
    <lineage>
        <taxon>Bacteria</taxon>
        <taxon>Pseudomonadati</taxon>
        <taxon>Campylobacterota</taxon>
        <taxon>Epsilonproteobacteria</taxon>
        <taxon>Campylobacterales</taxon>
        <taxon>Helicobacteraceae</taxon>
        <taxon>Wolinella</taxon>
    </lineage>
</organism>
<dbReference type="EC" id="1.12.5.1"/>
<dbReference type="EMBL" id="X65189">
    <property type="protein sequence ID" value="CAA46302.1"/>
    <property type="status" value="ALT_INIT"/>
    <property type="molecule type" value="Genomic_DNA"/>
</dbReference>
<dbReference type="EMBL" id="BX571661">
    <property type="protein sequence ID" value="CAE10714.1"/>
    <property type="status" value="ALT_INIT"/>
    <property type="molecule type" value="Genomic_DNA"/>
</dbReference>
<dbReference type="PIR" id="S33852">
    <property type="entry name" value="S33852"/>
</dbReference>
<dbReference type="SMR" id="P31884"/>
<dbReference type="STRING" id="273121.WS1687"/>
<dbReference type="TCDB" id="3.D.7.2.2">
    <property type="family name" value="the h2:heterodisulfide oxidoreductase (hho) family"/>
</dbReference>
<dbReference type="KEGG" id="wsu:WS1687"/>
<dbReference type="eggNOG" id="COG1740">
    <property type="taxonomic scope" value="Bacteria"/>
</dbReference>
<dbReference type="HOGENOM" id="CLU_046107_0_0_7"/>
<dbReference type="Proteomes" id="UP000000422">
    <property type="component" value="Chromosome"/>
</dbReference>
<dbReference type="GO" id="GO:0044569">
    <property type="term" value="C:[Ni-Fe] hydrogenase complex"/>
    <property type="evidence" value="ECO:0007669"/>
    <property type="project" value="TreeGrafter"/>
</dbReference>
<dbReference type="GO" id="GO:0009375">
    <property type="term" value="C:ferredoxin hydrogenase complex"/>
    <property type="evidence" value="ECO:0007669"/>
    <property type="project" value="InterPro"/>
</dbReference>
<dbReference type="GO" id="GO:0005886">
    <property type="term" value="C:plasma membrane"/>
    <property type="evidence" value="ECO:0007669"/>
    <property type="project" value="UniProtKB-SubCell"/>
</dbReference>
<dbReference type="GO" id="GO:0051538">
    <property type="term" value="F:3 iron, 4 sulfur cluster binding"/>
    <property type="evidence" value="ECO:0007669"/>
    <property type="project" value="UniProtKB-KW"/>
</dbReference>
<dbReference type="GO" id="GO:0051539">
    <property type="term" value="F:4 iron, 4 sulfur cluster binding"/>
    <property type="evidence" value="ECO:0007669"/>
    <property type="project" value="UniProtKB-KW"/>
</dbReference>
<dbReference type="GO" id="GO:0009055">
    <property type="term" value="F:electron transfer activity"/>
    <property type="evidence" value="ECO:0007669"/>
    <property type="project" value="TreeGrafter"/>
</dbReference>
<dbReference type="GO" id="GO:0008901">
    <property type="term" value="F:ferredoxin hydrogenase activity"/>
    <property type="evidence" value="ECO:0007669"/>
    <property type="project" value="InterPro"/>
</dbReference>
<dbReference type="GO" id="GO:0047067">
    <property type="term" value="F:hydrogen:quinone oxidoreductase activity"/>
    <property type="evidence" value="ECO:0007669"/>
    <property type="project" value="UniProtKB-EC"/>
</dbReference>
<dbReference type="GO" id="GO:0046872">
    <property type="term" value="F:metal ion binding"/>
    <property type="evidence" value="ECO:0007669"/>
    <property type="project" value="UniProtKB-KW"/>
</dbReference>
<dbReference type="GO" id="GO:0009061">
    <property type="term" value="P:anaerobic respiration"/>
    <property type="evidence" value="ECO:0007669"/>
    <property type="project" value="TreeGrafter"/>
</dbReference>
<dbReference type="Gene3D" id="4.10.480.10">
    <property type="entry name" value="Cytochrome-c3 hydrogenase, C-terminal domain"/>
    <property type="match status" value="1"/>
</dbReference>
<dbReference type="Gene3D" id="3.40.50.700">
    <property type="entry name" value="NADH:ubiquinone oxidoreductase-like, 20kDa subunit"/>
    <property type="match status" value="1"/>
</dbReference>
<dbReference type="InterPro" id="IPR027394">
    <property type="entry name" value="Cytochrome-c3_hydrogenase_C"/>
</dbReference>
<dbReference type="InterPro" id="IPR006137">
    <property type="entry name" value="NADH_UbQ_OxRdtase-like_20kDa"/>
</dbReference>
<dbReference type="InterPro" id="IPR037148">
    <property type="entry name" value="NiFe-Hase_small_C_sf"/>
</dbReference>
<dbReference type="InterPro" id="IPR037024">
    <property type="entry name" value="NiFe_Hase_small_N_sf"/>
</dbReference>
<dbReference type="InterPro" id="IPR001821">
    <property type="entry name" value="NiFe_hydrogenase_ssu"/>
</dbReference>
<dbReference type="InterPro" id="IPR006311">
    <property type="entry name" value="TAT_signal"/>
</dbReference>
<dbReference type="NCBIfam" id="TIGR00391">
    <property type="entry name" value="hydA"/>
    <property type="match status" value="1"/>
</dbReference>
<dbReference type="PANTHER" id="PTHR30013:SF7">
    <property type="entry name" value="HYDROGENASE-2 SMALL CHAIN"/>
    <property type="match status" value="1"/>
</dbReference>
<dbReference type="PANTHER" id="PTHR30013">
    <property type="entry name" value="NIFE / NIFESE HYDROGENASE SMALL SUBUNIT FAMILY MEMBER"/>
    <property type="match status" value="1"/>
</dbReference>
<dbReference type="Pfam" id="PF14720">
    <property type="entry name" value="NiFe_hyd_SSU_C"/>
    <property type="match status" value="1"/>
</dbReference>
<dbReference type="Pfam" id="PF01058">
    <property type="entry name" value="Oxidored_q6"/>
    <property type="match status" value="1"/>
</dbReference>
<dbReference type="PIRSF" id="PIRSF000310">
    <property type="entry name" value="NiFe_hyd_ssu"/>
    <property type="match status" value="1"/>
</dbReference>
<dbReference type="PRINTS" id="PR00614">
    <property type="entry name" value="NIHGNASESMLL"/>
</dbReference>
<dbReference type="SUPFAM" id="SSF56770">
    <property type="entry name" value="HydA/Nqo6-like"/>
    <property type="match status" value="1"/>
</dbReference>
<dbReference type="PROSITE" id="PS51318">
    <property type="entry name" value="TAT"/>
    <property type="match status" value="1"/>
</dbReference>
<gene>
    <name type="primary">hydA</name>
    <name type="ordered locus">WS1687</name>
</gene>
<protein>
    <recommendedName>
        <fullName>Quinone-reactive Ni/Fe-hydrogenase small chain</fullName>
        <ecNumber>1.12.5.1</ecNumber>
    </recommendedName>
    <alternativeName>
        <fullName>Hydrogen:quinone oxidoreductase</fullName>
    </alternativeName>
    <alternativeName>
        <fullName>Membrane-bound hydrogenase small subunit</fullName>
    </alternativeName>
</protein>
<name>MBHS_WOLSU</name>
<proteinExistence type="evidence at protein level"/>
<reference key="1">
    <citation type="journal article" date="1992" name="Eur. J. Biochem.">
        <title>The quinone-reactive Ni/Fe-hydrogenase of Wolinella succinogenes.</title>
        <authorList>
            <person name="Dross F."/>
            <person name="Geisler V."/>
            <person name="Lenger R."/>
            <person name="Theis F."/>
            <person name="Krafft T."/>
            <person name="Fahrenholz F."/>
            <person name="Kojro E."/>
            <person name="Duchene A."/>
            <person name="Tripier D."/>
            <person name="Juvenal K."/>
            <person name="Kroeger A."/>
        </authorList>
    </citation>
    <scope>NUCLEOTIDE SEQUENCE [GENOMIC DNA]</scope>
    <scope>PROTEIN SEQUENCE OF 37-52</scope>
</reference>
<reference key="2">
    <citation type="journal article" date="1993" name="Eur. J. Biochem.">
        <authorList>
            <person name="Dross F."/>
            <person name="Geisler V."/>
            <person name="Lenger R."/>
            <person name="Theis F."/>
            <person name="Krafft T."/>
            <person name="Fahrenholz F."/>
            <person name="Kojro E."/>
            <person name="Duchene A."/>
            <person name="Tripier D."/>
            <person name="Juvenal K."/>
            <person name="Kroeger A."/>
        </authorList>
    </citation>
    <scope>ERRATUM OF PUBMED:1587288</scope>
</reference>
<reference key="3">
    <citation type="journal article" date="2003" name="Proc. Natl. Acad. Sci. U.S.A.">
        <title>Complete genome sequence and analysis of Wolinella succinogenes.</title>
        <authorList>
            <person name="Baar C."/>
            <person name="Eppinger M."/>
            <person name="Raddatz G."/>
            <person name="Simon J."/>
            <person name="Lanz C."/>
            <person name="Klimmek O."/>
            <person name="Nandakumar R."/>
            <person name="Gross R."/>
            <person name="Rosinus A."/>
            <person name="Keller H."/>
            <person name="Jagtap P."/>
            <person name="Linke B."/>
            <person name="Meyer F."/>
            <person name="Lederer H."/>
            <person name="Schuster S.C."/>
        </authorList>
    </citation>
    <scope>NUCLEOTIDE SEQUENCE [LARGE SCALE GENOMIC DNA]</scope>
    <source>
        <strain>ATCC 29543 / DSM 1740 / CCUG 13145 / JCM 31913 / LMG 7466 / NCTC 11488 / FDC 602W</strain>
    </source>
</reference>
<keyword id="KW-0003">3Fe-4S</keyword>
<keyword id="KW-0004">4Fe-4S</keyword>
<keyword id="KW-1003">Cell membrane</keyword>
<keyword id="KW-0903">Direct protein sequencing</keyword>
<keyword id="KW-0408">Iron</keyword>
<keyword id="KW-0411">Iron-sulfur</keyword>
<keyword id="KW-0472">Membrane</keyword>
<keyword id="KW-0479">Metal-binding</keyword>
<keyword id="KW-0560">Oxidoreductase</keyword>
<keyword id="KW-1185">Reference proteome</keyword>
<keyword id="KW-0732">Signal</keyword>
<evidence type="ECO:0000250" key="1">
    <source>
        <dbReference type="UniProtKB" id="P21853"/>
    </source>
</evidence>
<evidence type="ECO:0000255" key="2">
    <source>
        <dbReference type="PROSITE-ProRule" id="PRU00648"/>
    </source>
</evidence>
<evidence type="ECO:0000269" key="3">
    <source>
    </source>
</evidence>
<evidence type="ECO:0000305" key="4"/>
<feature type="signal peptide" description="Tat-type signal" evidence="2 3">
    <location>
        <begin position="1"/>
        <end position="36"/>
    </location>
</feature>
<feature type="chain" id="PRO_0000013437" description="Quinone-reactive Ni/Fe-hydrogenase small chain">
    <location>
        <begin position="37"/>
        <end position="354"/>
    </location>
</feature>
<feature type="binding site" evidence="1">
    <location>
        <position position="53"/>
    </location>
    <ligand>
        <name>[4Fe-4S] cluster</name>
        <dbReference type="ChEBI" id="CHEBI:49883"/>
        <label>1</label>
    </ligand>
</feature>
<feature type="binding site" evidence="1">
    <location>
        <position position="56"/>
    </location>
    <ligand>
        <name>[4Fe-4S] cluster</name>
        <dbReference type="ChEBI" id="CHEBI:49883"/>
        <label>1</label>
    </ligand>
</feature>
<feature type="binding site" evidence="1">
    <location>
        <position position="153"/>
    </location>
    <ligand>
        <name>[4Fe-4S] cluster</name>
        <dbReference type="ChEBI" id="CHEBI:49883"/>
        <label>1</label>
    </ligand>
</feature>
<feature type="binding site" evidence="1">
    <location>
        <position position="186"/>
    </location>
    <ligand>
        <name>[4Fe-4S] cluster</name>
        <dbReference type="ChEBI" id="CHEBI:49883"/>
        <label>1</label>
    </ligand>
</feature>
<feature type="binding site" evidence="1">
    <location>
        <position position="224"/>
    </location>
    <ligand>
        <name>[4Fe-4S] cluster</name>
        <dbReference type="ChEBI" id="CHEBI:49883"/>
        <label>2</label>
    </ligand>
</feature>
<feature type="binding site" evidence="1">
    <location>
        <position position="227"/>
    </location>
    <ligand>
        <name>[4Fe-4S] cluster</name>
        <dbReference type="ChEBI" id="CHEBI:49883"/>
        <label>2</label>
    </ligand>
</feature>
<feature type="binding site" evidence="1">
    <location>
        <position position="252"/>
    </location>
    <ligand>
        <name>[4Fe-4S] cluster</name>
        <dbReference type="ChEBI" id="CHEBI:49883"/>
        <label>2</label>
    </ligand>
</feature>
<feature type="binding site" evidence="1">
    <location>
        <position position="258"/>
    </location>
    <ligand>
        <name>[4Fe-4S] cluster</name>
        <dbReference type="ChEBI" id="CHEBI:49883"/>
        <label>2</label>
    </ligand>
</feature>
<feature type="binding site" evidence="1">
    <location>
        <position position="267"/>
    </location>
    <ligand>
        <name>[3Fe-4S] cluster</name>
        <dbReference type="ChEBI" id="CHEBI:21137"/>
    </ligand>
</feature>
<feature type="binding site" evidence="1">
    <location>
        <position position="286"/>
    </location>
    <ligand>
        <name>[3Fe-4S] cluster</name>
        <dbReference type="ChEBI" id="CHEBI:21137"/>
    </ligand>
</feature>
<feature type="binding site" evidence="1">
    <location>
        <position position="289"/>
    </location>
    <ligand>
        <name>[3Fe-4S] cluster</name>
        <dbReference type="ChEBI" id="CHEBI:21137"/>
    </ligand>
</feature>
<comment type="catalytic activity">
    <reaction>
        <text>H2 + a menaquinone = a menaquinol</text>
        <dbReference type="Rhea" id="RHEA:18641"/>
        <dbReference type="Rhea" id="RHEA-COMP:9537"/>
        <dbReference type="Rhea" id="RHEA-COMP:9539"/>
        <dbReference type="ChEBI" id="CHEBI:16374"/>
        <dbReference type="ChEBI" id="CHEBI:18151"/>
        <dbReference type="ChEBI" id="CHEBI:18276"/>
        <dbReference type="EC" id="1.12.5.1"/>
    </reaction>
</comment>
<comment type="cofactor">
    <cofactor evidence="1">
        <name>[4Fe-4S] cluster</name>
        <dbReference type="ChEBI" id="CHEBI:49883"/>
    </cofactor>
    <text evidence="1">Binds 2 [4Fe-4S] clusters.</text>
</comment>
<comment type="cofactor">
    <cofactor evidence="1">
        <name>[3Fe-4S] cluster</name>
        <dbReference type="ChEBI" id="CHEBI:21137"/>
    </cofactor>
    <text evidence="1">Binds 1 [3Fe-4S] cluster.</text>
</comment>
<comment type="subunit">
    <text>Heterodimer of a large and a small subunit.</text>
</comment>
<comment type="subcellular location">
    <subcellularLocation>
        <location>Cell membrane</location>
        <topology>Peripheral membrane protein</topology>
    </subcellularLocation>
</comment>
<comment type="PTM">
    <text>Predicted to be exported by the Tat system. The position of the signal peptide cleavage has been experimentally proven.</text>
</comment>
<comment type="similarity">
    <text evidence="4">Belongs to the [NiFe]/[NiFeSe] hydrogenase small subunit family.</text>
</comment>
<comment type="sequence caution" evidence="4">
    <conflict type="erroneous initiation">
        <sequence resource="EMBL-CDS" id="CAA46302"/>
    </conflict>
</comment>
<comment type="sequence caution" evidence="4">
    <conflict type="erroneous initiation">
        <sequence resource="EMBL-CDS" id="CAE10714"/>
    </conflict>
</comment>